<gene>
    <name evidence="1" type="primary">tig</name>
    <name type="ordered locus">CLD_1299</name>
</gene>
<reference key="1">
    <citation type="journal article" date="2007" name="PLoS ONE">
        <title>Analysis of the neurotoxin complex genes in Clostridium botulinum A1-A4 and B1 strains: BoNT/A3, /Ba4 and /B1 clusters are located within plasmids.</title>
        <authorList>
            <person name="Smith T.J."/>
            <person name="Hill K.K."/>
            <person name="Foley B.T."/>
            <person name="Detter J.C."/>
            <person name="Munk A.C."/>
            <person name="Bruce D.C."/>
            <person name="Doggett N.A."/>
            <person name="Smith L.A."/>
            <person name="Marks J.D."/>
            <person name="Xie G."/>
            <person name="Brettin T.S."/>
        </authorList>
    </citation>
    <scope>NUCLEOTIDE SEQUENCE [LARGE SCALE GENOMIC DNA]</scope>
    <source>
        <strain>Okra / Type B1</strain>
    </source>
</reference>
<protein>
    <recommendedName>
        <fullName evidence="1">Trigger factor</fullName>
        <shortName evidence="1">TF</shortName>
        <ecNumber evidence="1">5.2.1.8</ecNumber>
    </recommendedName>
    <alternativeName>
        <fullName evidence="1">PPIase</fullName>
    </alternativeName>
</protein>
<evidence type="ECO:0000255" key="1">
    <source>
        <dbReference type="HAMAP-Rule" id="MF_00303"/>
    </source>
</evidence>
<comment type="function">
    <text evidence="1">Involved in protein export. Acts as a chaperone by maintaining the newly synthesized protein in an open conformation. Functions as a peptidyl-prolyl cis-trans isomerase.</text>
</comment>
<comment type="catalytic activity">
    <reaction evidence="1">
        <text>[protein]-peptidylproline (omega=180) = [protein]-peptidylproline (omega=0)</text>
        <dbReference type="Rhea" id="RHEA:16237"/>
        <dbReference type="Rhea" id="RHEA-COMP:10747"/>
        <dbReference type="Rhea" id="RHEA-COMP:10748"/>
        <dbReference type="ChEBI" id="CHEBI:83833"/>
        <dbReference type="ChEBI" id="CHEBI:83834"/>
        <dbReference type="EC" id="5.2.1.8"/>
    </reaction>
</comment>
<comment type="subcellular location">
    <subcellularLocation>
        <location>Cytoplasm</location>
    </subcellularLocation>
    <text evidence="1">About half TF is bound to the ribosome near the polypeptide exit tunnel while the other half is free in the cytoplasm.</text>
</comment>
<comment type="domain">
    <text evidence="1">Consists of 3 domains; the N-terminus binds the ribosome, the middle domain has PPIase activity, while the C-terminus has intrinsic chaperone activity on its own.</text>
</comment>
<comment type="similarity">
    <text evidence="1">Belongs to the FKBP-type PPIase family. Tig subfamily.</text>
</comment>
<proteinExistence type="inferred from homology"/>
<accession>B1IND8</accession>
<sequence>MNVKVENIEKNVVKLEITVDSEKFNEAVKKSFKKNAKRFNVPGFRKGKAPLNIIKKYYGEGVLFEDAINFCCEDTYPKAIEENNIKPVDYPQIDVVQIGEGKDFIYTAEVTTVPEVKLGEYKGVEVKKVSYEVEDEAVENELKSMQEKNARVSLKEEGEIEKGNIAIIDFKGYVDGKAFEGGEAKDYEIEIGSGTFIGDFEDQLVGLKKDESKEVNVSFPEEYGREDLNGKPATFEVTIKDIKVKELPALDDEFAKEVSEFDTLEELKSDIKDRMKKELSEKAKAEYEEAVVEAVGANAEIEIPKVMIEKEIENMVRDLEMRLKYQGLDLKSYYEFTNSSEEKVKEYMRETAEKRVKTDLIMQEIAKVEDIKATEEELKEKAMEVAKQYGQKDVEKTAELIANAQKAYLEIDIVNGKVLDLLVENSKEIA</sequence>
<feature type="chain" id="PRO_1000115522" description="Trigger factor">
    <location>
        <begin position="1"/>
        <end position="430"/>
    </location>
</feature>
<feature type="domain" description="PPIase FKBP-type" evidence="1">
    <location>
        <begin position="163"/>
        <end position="248"/>
    </location>
</feature>
<keyword id="KW-0131">Cell cycle</keyword>
<keyword id="KW-0132">Cell division</keyword>
<keyword id="KW-0143">Chaperone</keyword>
<keyword id="KW-0963">Cytoplasm</keyword>
<keyword id="KW-0413">Isomerase</keyword>
<keyword id="KW-0697">Rotamase</keyword>
<name>TIG_CLOBK</name>
<organism>
    <name type="scientific">Clostridium botulinum (strain Okra / Type B1)</name>
    <dbReference type="NCBI Taxonomy" id="498213"/>
    <lineage>
        <taxon>Bacteria</taxon>
        <taxon>Bacillati</taxon>
        <taxon>Bacillota</taxon>
        <taxon>Clostridia</taxon>
        <taxon>Eubacteriales</taxon>
        <taxon>Clostridiaceae</taxon>
        <taxon>Clostridium</taxon>
    </lineage>
</organism>
<dbReference type="EC" id="5.2.1.8" evidence="1"/>
<dbReference type="EMBL" id="CP000939">
    <property type="protein sequence ID" value="ACA44133.1"/>
    <property type="molecule type" value="Genomic_DNA"/>
</dbReference>
<dbReference type="RefSeq" id="WP_003405872.1">
    <property type="nucleotide sequence ID" value="NC_010516.1"/>
</dbReference>
<dbReference type="SMR" id="B1IND8"/>
<dbReference type="KEGG" id="cbb:CLD_1299"/>
<dbReference type="HOGENOM" id="CLU_033058_3_2_9"/>
<dbReference type="Proteomes" id="UP000008541">
    <property type="component" value="Chromosome"/>
</dbReference>
<dbReference type="GO" id="GO:0005737">
    <property type="term" value="C:cytoplasm"/>
    <property type="evidence" value="ECO:0007669"/>
    <property type="project" value="UniProtKB-SubCell"/>
</dbReference>
<dbReference type="GO" id="GO:0003755">
    <property type="term" value="F:peptidyl-prolyl cis-trans isomerase activity"/>
    <property type="evidence" value="ECO:0007669"/>
    <property type="project" value="UniProtKB-UniRule"/>
</dbReference>
<dbReference type="GO" id="GO:0044183">
    <property type="term" value="F:protein folding chaperone"/>
    <property type="evidence" value="ECO:0007669"/>
    <property type="project" value="TreeGrafter"/>
</dbReference>
<dbReference type="GO" id="GO:0043022">
    <property type="term" value="F:ribosome binding"/>
    <property type="evidence" value="ECO:0007669"/>
    <property type="project" value="TreeGrafter"/>
</dbReference>
<dbReference type="GO" id="GO:0051083">
    <property type="term" value="P:'de novo' cotranslational protein folding"/>
    <property type="evidence" value="ECO:0007669"/>
    <property type="project" value="TreeGrafter"/>
</dbReference>
<dbReference type="GO" id="GO:0051301">
    <property type="term" value="P:cell division"/>
    <property type="evidence" value="ECO:0007669"/>
    <property type="project" value="UniProtKB-KW"/>
</dbReference>
<dbReference type="GO" id="GO:0061077">
    <property type="term" value="P:chaperone-mediated protein folding"/>
    <property type="evidence" value="ECO:0007669"/>
    <property type="project" value="TreeGrafter"/>
</dbReference>
<dbReference type="GO" id="GO:0015031">
    <property type="term" value="P:protein transport"/>
    <property type="evidence" value="ECO:0007669"/>
    <property type="project" value="UniProtKB-UniRule"/>
</dbReference>
<dbReference type="GO" id="GO:0043335">
    <property type="term" value="P:protein unfolding"/>
    <property type="evidence" value="ECO:0007669"/>
    <property type="project" value="TreeGrafter"/>
</dbReference>
<dbReference type="FunFam" id="1.10.3120.10:FF:000010">
    <property type="entry name" value="Trigger factor"/>
    <property type="match status" value="1"/>
</dbReference>
<dbReference type="FunFam" id="3.10.50.40:FF:000001">
    <property type="entry name" value="Trigger factor"/>
    <property type="match status" value="1"/>
</dbReference>
<dbReference type="Gene3D" id="3.10.50.40">
    <property type="match status" value="1"/>
</dbReference>
<dbReference type="Gene3D" id="3.30.70.1050">
    <property type="entry name" value="Trigger factor ribosome-binding domain"/>
    <property type="match status" value="1"/>
</dbReference>
<dbReference type="Gene3D" id="1.10.3120.10">
    <property type="entry name" value="Trigger factor, C-terminal domain"/>
    <property type="match status" value="1"/>
</dbReference>
<dbReference type="HAMAP" id="MF_00303">
    <property type="entry name" value="Trigger_factor_Tig"/>
    <property type="match status" value="1"/>
</dbReference>
<dbReference type="InterPro" id="IPR046357">
    <property type="entry name" value="PPIase_dom_sf"/>
</dbReference>
<dbReference type="InterPro" id="IPR001179">
    <property type="entry name" value="PPIase_FKBP_dom"/>
</dbReference>
<dbReference type="InterPro" id="IPR005215">
    <property type="entry name" value="Trig_fac"/>
</dbReference>
<dbReference type="InterPro" id="IPR008880">
    <property type="entry name" value="Trigger_fac_C"/>
</dbReference>
<dbReference type="InterPro" id="IPR037041">
    <property type="entry name" value="Trigger_fac_C_sf"/>
</dbReference>
<dbReference type="InterPro" id="IPR008881">
    <property type="entry name" value="Trigger_fac_ribosome-bd_bac"/>
</dbReference>
<dbReference type="InterPro" id="IPR036611">
    <property type="entry name" value="Trigger_fac_ribosome-bd_sf"/>
</dbReference>
<dbReference type="InterPro" id="IPR027304">
    <property type="entry name" value="Trigger_fact/SurA_dom_sf"/>
</dbReference>
<dbReference type="NCBIfam" id="TIGR00115">
    <property type="entry name" value="tig"/>
    <property type="match status" value="1"/>
</dbReference>
<dbReference type="PANTHER" id="PTHR30560">
    <property type="entry name" value="TRIGGER FACTOR CHAPERONE AND PEPTIDYL-PROLYL CIS/TRANS ISOMERASE"/>
    <property type="match status" value="1"/>
</dbReference>
<dbReference type="PANTHER" id="PTHR30560:SF3">
    <property type="entry name" value="TRIGGER FACTOR-LIKE PROTEIN TIG, CHLOROPLASTIC"/>
    <property type="match status" value="1"/>
</dbReference>
<dbReference type="Pfam" id="PF00254">
    <property type="entry name" value="FKBP_C"/>
    <property type="match status" value="1"/>
</dbReference>
<dbReference type="Pfam" id="PF05698">
    <property type="entry name" value="Trigger_C"/>
    <property type="match status" value="1"/>
</dbReference>
<dbReference type="Pfam" id="PF05697">
    <property type="entry name" value="Trigger_N"/>
    <property type="match status" value="1"/>
</dbReference>
<dbReference type="PIRSF" id="PIRSF003095">
    <property type="entry name" value="Trigger_factor"/>
    <property type="match status" value="1"/>
</dbReference>
<dbReference type="SUPFAM" id="SSF54534">
    <property type="entry name" value="FKBP-like"/>
    <property type="match status" value="1"/>
</dbReference>
<dbReference type="SUPFAM" id="SSF109998">
    <property type="entry name" value="Triger factor/SurA peptide-binding domain-like"/>
    <property type="match status" value="1"/>
</dbReference>
<dbReference type="SUPFAM" id="SSF102735">
    <property type="entry name" value="Trigger factor ribosome-binding domain"/>
    <property type="match status" value="1"/>
</dbReference>
<dbReference type="PROSITE" id="PS50059">
    <property type="entry name" value="FKBP_PPIASE"/>
    <property type="match status" value="1"/>
</dbReference>